<evidence type="ECO:0000255" key="1">
    <source>
        <dbReference type="HAMAP-Rule" id="MF_01007"/>
    </source>
</evidence>
<keyword id="KW-0963">Cytoplasm</keyword>
<keyword id="KW-0489">Methyltransferase</keyword>
<keyword id="KW-0698">rRNA processing</keyword>
<keyword id="KW-0949">S-adenosyl-L-methionine</keyword>
<keyword id="KW-0808">Transferase</keyword>
<organism>
    <name type="scientific">Histophilus somni (strain 129Pt)</name>
    <name type="common">Haemophilus somnus</name>
    <dbReference type="NCBI Taxonomy" id="205914"/>
    <lineage>
        <taxon>Bacteria</taxon>
        <taxon>Pseudomonadati</taxon>
        <taxon>Pseudomonadota</taxon>
        <taxon>Gammaproteobacteria</taxon>
        <taxon>Pasteurellales</taxon>
        <taxon>Pasteurellaceae</taxon>
        <taxon>Histophilus</taxon>
    </lineage>
</organism>
<feature type="chain" id="PRO_0000386920" description="Ribosomal RNA small subunit methyltransferase H">
    <location>
        <begin position="1"/>
        <end position="319"/>
    </location>
</feature>
<feature type="binding site" evidence="1">
    <location>
        <begin position="38"/>
        <end position="40"/>
    </location>
    <ligand>
        <name>S-adenosyl-L-methionine</name>
        <dbReference type="ChEBI" id="CHEBI:59789"/>
    </ligand>
</feature>
<feature type="binding site" evidence="1">
    <location>
        <position position="58"/>
    </location>
    <ligand>
        <name>S-adenosyl-L-methionine</name>
        <dbReference type="ChEBI" id="CHEBI:59789"/>
    </ligand>
</feature>
<feature type="binding site" evidence="1">
    <location>
        <position position="82"/>
    </location>
    <ligand>
        <name>S-adenosyl-L-methionine</name>
        <dbReference type="ChEBI" id="CHEBI:59789"/>
    </ligand>
</feature>
<feature type="binding site" evidence="1">
    <location>
        <position position="104"/>
    </location>
    <ligand>
        <name>S-adenosyl-L-methionine</name>
        <dbReference type="ChEBI" id="CHEBI:59789"/>
    </ligand>
</feature>
<feature type="binding site" evidence="1">
    <location>
        <position position="111"/>
    </location>
    <ligand>
        <name>S-adenosyl-L-methionine</name>
        <dbReference type="ChEBI" id="CHEBI:59789"/>
    </ligand>
</feature>
<dbReference type="EC" id="2.1.1.199" evidence="1"/>
<dbReference type="EMBL" id="CP000436">
    <property type="protein sequence ID" value="ABI24628.1"/>
    <property type="molecule type" value="Genomic_DNA"/>
</dbReference>
<dbReference type="SMR" id="Q0I1E1"/>
<dbReference type="KEGG" id="hso:HS_0350"/>
<dbReference type="eggNOG" id="COG0275">
    <property type="taxonomic scope" value="Bacteria"/>
</dbReference>
<dbReference type="HOGENOM" id="CLU_038422_2_0_6"/>
<dbReference type="GO" id="GO:0005737">
    <property type="term" value="C:cytoplasm"/>
    <property type="evidence" value="ECO:0007669"/>
    <property type="project" value="UniProtKB-SubCell"/>
</dbReference>
<dbReference type="GO" id="GO:0071424">
    <property type="term" value="F:rRNA (cytosine-N4-)-methyltransferase activity"/>
    <property type="evidence" value="ECO:0007669"/>
    <property type="project" value="UniProtKB-UniRule"/>
</dbReference>
<dbReference type="GO" id="GO:0070475">
    <property type="term" value="P:rRNA base methylation"/>
    <property type="evidence" value="ECO:0007669"/>
    <property type="project" value="UniProtKB-UniRule"/>
</dbReference>
<dbReference type="FunFam" id="1.10.150.170:FF:000001">
    <property type="entry name" value="Ribosomal RNA small subunit methyltransferase H"/>
    <property type="match status" value="1"/>
</dbReference>
<dbReference type="Gene3D" id="1.10.150.170">
    <property type="entry name" value="Putative methyltransferase TM0872, insert domain"/>
    <property type="match status" value="1"/>
</dbReference>
<dbReference type="Gene3D" id="3.40.50.150">
    <property type="entry name" value="Vaccinia Virus protein VP39"/>
    <property type="match status" value="1"/>
</dbReference>
<dbReference type="HAMAP" id="MF_01007">
    <property type="entry name" value="16SrRNA_methyltr_H"/>
    <property type="match status" value="1"/>
</dbReference>
<dbReference type="InterPro" id="IPR002903">
    <property type="entry name" value="RsmH"/>
</dbReference>
<dbReference type="InterPro" id="IPR023397">
    <property type="entry name" value="SAM-dep_MeTrfase_MraW_recog"/>
</dbReference>
<dbReference type="InterPro" id="IPR029063">
    <property type="entry name" value="SAM-dependent_MTases_sf"/>
</dbReference>
<dbReference type="NCBIfam" id="TIGR00006">
    <property type="entry name" value="16S rRNA (cytosine(1402)-N(4))-methyltransferase RsmH"/>
    <property type="match status" value="1"/>
</dbReference>
<dbReference type="PANTHER" id="PTHR11265:SF0">
    <property type="entry name" value="12S RRNA N4-METHYLCYTIDINE METHYLTRANSFERASE"/>
    <property type="match status" value="1"/>
</dbReference>
<dbReference type="PANTHER" id="PTHR11265">
    <property type="entry name" value="S-ADENOSYL-METHYLTRANSFERASE MRAW"/>
    <property type="match status" value="1"/>
</dbReference>
<dbReference type="Pfam" id="PF01795">
    <property type="entry name" value="Methyltransf_5"/>
    <property type="match status" value="1"/>
</dbReference>
<dbReference type="PIRSF" id="PIRSF004486">
    <property type="entry name" value="MraW"/>
    <property type="match status" value="1"/>
</dbReference>
<dbReference type="SUPFAM" id="SSF81799">
    <property type="entry name" value="Putative methyltransferase TM0872, insert domain"/>
    <property type="match status" value="1"/>
</dbReference>
<dbReference type="SUPFAM" id="SSF53335">
    <property type="entry name" value="S-adenosyl-L-methionine-dependent methyltransferases"/>
    <property type="match status" value="1"/>
</dbReference>
<accession>Q0I1E1</accession>
<comment type="function">
    <text evidence="1">Specifically methylates the N4 position of cytidine in position 1402 (C1402) of 16S rRNA.</text>
</comment>
<comment type="catalytic activity">
    <reaction evidence="1">
        <text>cytidine(1402) in 16S rRNA + S-adenosyl-L-methionine = N(4)-methylcytidine(1402) in 16S rRNA + S-adenosyl-L-homocysteine + H(+)</text>
        <dbReference type="Rhea" id="RHEA:42928"/>
        <dbReference type="Rhea" id="RHEA-COMP:10286"/>
        <dbReference type="Rhea" id="RHEA-COMP:10287"/>
        <dbReference type="ChEBI" id="CHEBI:15378"/>
        <dbReference type="ChEBI" id="CHEBI:57856"/>
        <dbReference type="ChEBI" id="CHEBI:59789"/>
        <dbReference type="ChEBI" id="CHEBI:74506"/>
        <dbReference type="ChEBI" id="CHEBI:82748"/>
        <dbReference type="EC" id="2.1.1.199"/>
    </reaction>
</comment>
<comment type="subcellular location">
    <subcellularLocation>
        <location evidence="1">Cytoplasm</location>
    </subcellularLocation>
</comment>
<comment type="similarity">
    <text evidence="1">Belongs to the methyltransferase superfamily. RsmH family.</text>
</comment>
<reference key="1">
    <citation type="journal article" date="2007" name="J. Bacteriol.">
        <title>Complete genome sequence of Haemophilus somnus (Histophilus somni) strain 129Pt and comparison to Haemophilus ducreyi 35000HP and Haemophilus influenzae Rd.</title>
        <authorList>
            <person name="Challacombe J.F."/>
            <person name="Duncan A.J."/>
            <person name="Brettin T.S."/>
            <person name="Bruce D."/>
            <person name="Chertkov O."/>
            <person name="Detter J.C."/>
            <person name="Han C.S."/>
            <person name="Misra M."/>
            <person name="Richardson P."/>
            <person name="Tapia R."/>
            <person name="Thayer N."/>
            <person name="Xie G."/>
            <person name="Inzana T.J."/>
        </authorList>
    </citation>
    <scope>NUCLEOTIDE SEQUENCE [LARGE SCALE GENOMIC DNA]</scope>
    <source>
        <strain>129Pt</strain>
    </source>
</reference>
<proteinExistence type="inferred from homology"/>
<name>RSMH_HISS1</name>
<gene>
    <name evidence="1" type="primary">rsmH</name>
    <name type="synonym">mraW</name>
    <name type="ordered locus">HS_0350</name>
</gene>
<protein>
    <recommendedName>
        <fullName evidence="1">Ribosomal RNA small subunit methyltransferase H</fullName>
        <ecNumber evidence="1">2.1.1.199</ecNumber>
    </recommendedName>
    <alternativeName>
        <fullName evidence="1">16S rRNA m(4)C1402 methyltransferase</fullName>
    </alternativeName>
    <alternativeName>
        <fullName evidence="1">rRNA (cytosine-N(4)-)-methyltransferase RsmH</fullName>
    </alternativeName>
</protein>
<sequence>MQDTFSSPEHFTVLLREAVGGLALKENGIYIDGTFGRGGHSRFILSQLSKKGQLIAIDRDPQAIQVAQNIQDSRFRIVHDSFSAIPDICEKLGLTGKIDGILLDLGVSSPQLDNAERGFSFMKDGPLDMRMDTTQGLSATEWLRLVSEQDLAWVLKTFGEERFAKRIAQAIVGYNKSAVQSGAEPLNRTLQLAELIAQSVPFKDKYKHPATRSFQAIRIFINSELDELEKVLNGALNVLAPQGRLSIISFHSLEDRMVKHFIRKQSKGDDLPKGLPLREEQIQHNQKLKPVGKAIMPTEQEMAANVRSRSAVLRIAERI</sequence>